<sequence length="342" mass="38569">MGLFTTRQLLGYTEQKVKFRALFLELFFRRTVNFHTEEVMLDKITGKTPVAAYVSPVVEGKVLRHRGGETRVLRPGYVKPKHEFNYQQAVERLPGEDPSQLNDPAYRRLRIITDNLKQEEHAIVQVEEMQAVNAVLYGKYTMEGDQFEKIEVDFGRSTKNNITQGSGKEWSKQDRDTFDPTHDIDLYCDLASGLVNIAIMDGTVWRLLNGFKLFREKLDTRRGSNSQLETAVKDLGAVVSFKGYYGDLAIVVAKTSYIAEDGIEKRYLPDGMLVLGNTAADGIRCYGAIQDAQALSEGVVASSRYPKHWLTVGDPAREFTMTQSAPLMVLPDPDEFVVVQVK</sequence>
<protein>
    <recommendedName>
        <fullName evidence="1">Major capsid protein</fullName>
    </recommendedName>
    <alternativeName>
        <fullName evidence="2">Gene product 7</fullName>
    </alternativeName>
    <alternativeName>
        <fullName evidence="1">Gene product E</fullName>
        <shortName evidence="1">gpE</shortName>
    </alternativeName>
    <alternativeName>
        <fullName evidence="1">Major head protein</fullName>
    </alternativeName>
</protein>
<name>CAPSD_BPP21</name>
<dbReference type="EMBL" id="M81255">
    <property type="protein sequence ID" value="AAA32346.1"/>
    <property type="molecule type" value="Genomic_DNA"/>
</dbReference>
<dbReference type="SMR" id="P68650"/>
<dbReference type="GO" id="GO:0030430">
    <property type="term" value="C:host cell cytoplasm"/>
    <property type="evidence" value="ECO:0007669"/>
    <property type="project" value="UniProtKB-SubCell"/>
</dbReference>
<dbReference type="GO" id="GO:0039620">
    <property type="term" value="C:T=7 icosahedral viral capsid"/>
    <property type="evidence" value="ECO:0007669"/>
    <property type="project" value="UniProtKB-KW"/>
</dbReference>
<dbReference type="Gene3D" id="3.30.1930.10">
    <property type="entry name" value="capsid protein of prophage domain"/>
    <property type="match status" value="1"/>
</dbReference>
<dbReference type="Gene3D" id="3.15.30.10">
    <property type="entry name" value="putative capsid protein of prophage domain like"/>
    <property type="match status" value="1"/>
</dbReference>
<dbReference type="HAMAP" id="MF_04133">
    <property type="entry name" value="CAPSID_LAMBDA"/>
    <property type="match status" value="1"/>
</dbReference>
<dbReference type="InterPro" id="IPR005564">
    <property type="entry name" value="Major_capsid_GpE"/>
</dbReference>
<dbReference type="Pfam" id="PF03864">
    <property type="entry name" value="Phage_cap_E"/>
    <property type="match status" value="1"/>
</dbReference>
<gene>
    <name evidence="1" type="primary">E</name>
    <name type="synonym">7</name>
</gene>
<accession>P68650</accession>
<accession>P36270</accession>
<evidence type="ECO:0000255" key="1">
    <source>
        <dbReference type="HAMAP-Rule" id="MF_04133"/>
    </source>
</evidence>
<evidence type="ECO:0000305" key="2"/>
<feature type="chain" id="PRO_0000077566" description="Major capsid protein">
    <location>
        <begin position="1"/>
        <end position="342"/>
    </location>
</feature>
<proteinExistence type="inferred from homology"/>
<organism>
    <name type="scientific">Enterobacteria phage P21</name>
    <name type="common">Bacteriophage 21</name>
    <name type="synonym">Bacteriophage P21</name>
    <dbReference type="NCBI Taxonomy" id="10711"/>
    <lineage>
        <taxon>Viruses</taxon>
        <taxon>Duplodnaviria</taxon>
        <taxon>Heunggongvirae</taxon>
        <taxon>Uroviricota</taxon>
        <taxon>Caudoviricetes</taxon>
        <taxon>Lambdavirus</taxon>
        <taxon>Lambdavirus lambda</taxon>
    </lineage>
</organism>
<keyword id="KW-0167">Capsid protein</keyword>
<keyword id="KW-1035">Host cytoplasm</keyword>
<keyword id="KW-0426">Late protein</keyword>
<keyword id="KW-1145">T=7 icosahedral capsid protein</keyword>
<keyword id="KW-0946">Virion</keyword>
<reference key="1">
    <citation type="journal article" date="1993" name="Gene">
        <title>Sequence analysis of the phage 21 genes for prohead assembly and head completion.</title>
        <authorList>
            <person name="Smith M.P."/>
            <person name="Feiss M."/>
        </authorList>
    </citation>
    <scope>NUCLEOTIDE SEQUENCE [GENOMIC DNA]</scope>
</reference>
<organismHost>
    <name type="scientific">Escherichia coli</name>
    <dbReference type="NCBI Taxonomy" id="562"/>
</organismHost>
<comment type="function">
    <text evidence="1">Assembles to form an icosahedral capsid with a T=7 symmetry. The icosahedral capsid is about 60 nm in diameter and composed of 415 major capsid proteins. The assembly is primed by the interaction between capsid assembly protease and portal dodecamer, and major capsid proteins assemble cooperatively to form the procapsid with the help of capsid scaffolding protein. Major capsid protein forms hexons and pentons of the icosahedron. Viral genomic DNA is packaged into the procapsid through the portal vertex. The packaging triggers a dramatic reconfiguration of the capsid shell.</text>
</comment>
<comment type="subunit">
    <text evidence="1">Homomultimer.</text>
</comment>
<comment type="subcellular location">
    <subcellularLocation>
        <location evidence="1">Virion</location>
    </subcellularLocation>
    <subcellularLocation>
        <location evidence="1">Host cytoplasm</location>
    </subcellularLocation>
    <text evidence="1">Forms the capsid icosahedric shell.</text>
</comment>
<comment type="similarity">
    <text evidence="1">Belongs to the lambda phage major capsid protein family.</text>
</comment>